<gene>
    <name type="primary">irx1-b</name>
    <name type="synonym">iro1-b</name>
</gene>
<comment type="function">
    <text evidence="1">Acts partially redundantly with other irx members in neural patterning. Required for formation of the posterior forebrain, midbrain, hindbrain, and to a lesser extent, spinal cord. Acts early in neural plate development to induce expression of some but not all proneural genes, and specify a neural precursor state. Also up-regulates repressors that prevent neuronal differentiation. Patterns the neuroectoderm in both the anterior/posterior and dorsal/ventral axes. Acts primarily as a transcriptional repressor during neural development, and binds to the bmp4 promoter to repress gene expression and thus mediate down-regulation of bmp4 by wnt signaling. Controls multiple processes through bmp4-repression including neural plate development, neural crest specification and Spemann organizer development. Involved in the specification of the preplacodal field at the anterior border of the neural plate. Regulates the genetic cascade of interactions that are necessary for positioning the isthmus organizer and the formation of the midbrain-hindbrain boundary. Required during at least two stages of pronephros kidney development; during neurula stages, maintains transcription of key renal genes to define the size and identity of the pronephric anlage, probably in part through regulation of bmp-signaling. Subsequently required for proper formation of the intermediate tubule segment of the pronephros. Acts principally as a transcriptional activator during pronephros development (By similarity).</text>
</comment>
<comment type="subcellular location">
    <subcellularLocation>
        <location evidence="2 5">Nucleus</location>
    </subcellularLocation>
</comment>
<comment type="similarity">
    <text evidence="2">Belongs to the TALE/IRO homeobox family.</text>
</comment>
<proteinExistence type="evidence at transcript level"/>
<keyword id="KW-0010">Activator</keyword>
<keyword id="KW-0217">Developmental protein</keyword>
<keyword id="KW-0221">Differentiation</keyword>
<keyword id="KW-0238">DNA-binding</keyword>
<keyword id="KW-0371">Homeobox</keyword>
<keyword id="KW-0524">Neurogenesis</keyword>
<keyword id="KW-0539">Nucleus</keyword>
<keyword id="KW-1185">Reference proteome</keyword>
<keyword id="KW-0678">Repressor</keyword>
<keyword id="KW-0804">Transcription</keyword>
<keyword id="KW-0805">Transcription regulation</keyword>
<dbReference type="EMBL" id="BC110767">
    <property type="protein sequence ID" value="AAI10768.1"/>
    <property type="molecule type" value="mRNA"/>
</dbReference>
<dbReference type="RefSeq" id="NP_001090157.1">
    <property type="nucleotide sequence ID" value="NM_001096688.1"/>
</dbReference>
<dbReference type="SMR" id="Q2TAQ8"/>
<dbReference type="DNASU" id="735237"/>
<dbReference type="GeneID" id="735237"/>
<dbReference type="KEGG" id="xla:735237"/>
<dbReference type="AGR" id="Xenbase:XB-GENE-6254076"/>
<dbReference type="CTD" id="735237"/>
<dbReference type="Xenbase" id="XB-GENE-6254076">
    <property type="gene designation" value="irx1.S"/>
</dbReference>
<dbReference type="OrthoDB" id="5399138at2759"/>
<dbReference type="Proteomes" id="UP000186698">
    <property type="component" value="Chromosome 6S"/>
</dbReference>
<dbReference type="Bgee" id="735237">
    <property type="expression patterns" value="Expressed in gastrula and 8 other cell types or tissues"/>
</dbReference>
<dbReference type="GO" id="GO:0005634">
    <property type="term" value="C:nucleus"/>
    <property type="evidence" value="ECO:0000250"/>
    <property type="project" value="UniProtKB"/>
</dbReference>
<dbReference type="GO" id="GO:0000981">
    <property type="term" value="F:DNA-binding transcription factor activity, RNA polymerase II-specific"/>
    <property type="evidence" value="ECO:0000318"/>
    <property type="project" value="GO_Central"/>
</dbReference>
<dbReference type="GO" id="GO:0000978">
    <property type="term" value="F:RNA polymerase II cis-regulatory region sequence-specific DNA binding"/>
    <property type="evidence" value="ECO:0000318"/>
    <property type="project" value="GO_Central"/>
</dbReference>
<dbReference type="GO" id="GO:0000976">
    <property type="term" value="F:transcription cis-regulatory region binding"/>
    <property type="evidence" value="ECO:0000250"/>
    <property type="project" value="UniProtKB"/>
</dbReference>
<dbReference type="GO" id="GO:0007420">
    <property type="term" value="P:brain development"/>
    <property type="evidence" value="ECO:0000250"/>
    <property type="project" value="UniProtKB"/>
</dbReference>
<dbReference type="GO" id="GO:0048468">
    <property type="term" value="P:cell development"/>
    <property type="evidence" value="ECO:0000318"/>
    <property type="project" value="GO_Central"/>
</dbReference>
<dbReference type="GO" id="GO:0001708">
    <property type="term" value="P:cell fate specification"/>
    <property type="evidence" value="ECO:0000250"/>
    <property type="project" value="UniProtKB"/>
</dbReference>
<dbReference type="GO" id="GO:0009953">
    <property type="term" value="P:dorsal/ventral pattern formation"/>
    <property type="evidence" value="ECO:0000250"/>
    <property type="project" value="UniProtKB"/>
</dbReference>
<dbReference type="GO" id="GO:0072005">
    <property type="term" value="P:maintenance of kidney identity"/>
    <property type="evidence" value="ECO:0000250"/>
    <property type="project" value="UniProtKB"/>
</dbReference>
<dbReference type="GO" id="GO:0007498">
    <property type="term" value="P:mesoderm development"/>
    <property type="evidence" value="ECO:0000250"/>
    <property type="project" value="UniProtKB"/>
</dbReference>
<dbReference type="GO" id="GO:0030917">
    <property type="term" value="P:midbrain-hindbrain boundary development"/>
    <property type="evidence" value="ECO:0000250"/>
    <property type="project" value="UniProtKB"/>
</dbReference>
<dbReference type="GO" id="GO:0030514">
    <property type="term" value="P:negative regulation of BMP signaling pathway"/>
    <property type="evidence" value="ECO:0000250"/>
    <property type="project" value="UniProtKB"/>
</dbReference>
<dbReference type="GO" id="GO:0045892">
    <property type="term" value="P:negative regulation of DNA-templated transcription"/>
    <property type="evidence" value="ECO:0000250"/>
    <property type="project" value="UniProtKB"/>
</dbReference>
<dbReference type="GO" id="GO:0000122">
    <property type="term" value="P:negative regulation of transcription by RNA polymerase II"/>
    <property type="evidence" value="ECO:0000250"/>
    <property type="project" value="UniProtKB"/>
</dbReference>
<dbReference type="GO" id="GO:0014036">
    <property type="term" value="P:neural crest cell fate specification"/>
    <property type="evidence" value="ECO:0000250"/>
    <property type="project" value="UniProtKB"/>
</dbReference>
<dbReference type="GO" id="GO:0022008">
    <property type="term" value="P:neurogenesis"/>
    <property type="evidence" value="ECO:0000250"/>
    <property type="project" value="UniProtKB"/>
</dbReference>
<dbReference type="GO" id="GO:0030182">
    <property type="term" value="P:neuron differentiation"/>
    <property type="evidence" value="ECO:0000318"/>
    <property type="project" value="GO_Central"/>
</dbReference>
<dbReference type="GO" id="GO:0045893">
    <property type="term" value="P:positive regulation of DNA-templated transcription"/>
    <property type="evidence" value="ECO:0000250"/>
    <property type="project" value="UniProtKB"/>
</dbReference>
<dbReference type="GO" id="GO:0045944">
    <property type="term" value="P:positive regulation of transcription by RNA polymerase II"/>
    <property type="evidence" value="ECO:0000250"/>
    <property type="project" value="UniProtKB"/>
</dbReference>
<dbReference type="GO" id="GO:0009954">
    <property type="term" value="P:proximal/distal pattern formation"/>
    <property type="evidence" value="ECO:0000250"/>
    <property type="project" value="UniProtKB"/>
</dbReference>
<dbReference type="GO" id="GO:0072196">
    <property type="term" value="P:proximal/distal pattern formation involved in pronephric nephron development"/>
    <property type="evidence" value="ECO:0000250"/>
    <property type="project" value="UniProtKB"/>
</dbReference>
<dbReference type="GO" id="GO:0006357">
    <property type="term" value="P:regulation of transcription by RNA polymerase II"/>
    <property type="evidence" value="ECO:0000318"/>
    <property type="project" value="GO_Central"/>
</dbReference>
<dbReference type="GO" id="GO:0039005">
    <property type="term" value="P:specification of pronephric tubule identity"/>
    <property type="evidence" value="ECO:0000250"/>
    <property type="project" value="UniProtKB"/>
</dbReference>
<dbReference type="GO" id="GO:0060062">
    <property type="term" value="P:Spemann organizer formation at the dorsal lip of the blastopore"/>
    <property type="evidence" value="ECO:0000250"/>
    <property type="project" value="UniProtKB"/>
</dbReference>
<dbReference type="CDD" id="cd00086">
    <property type="entry name" value="homeodomain"/>
    <property type="match status" value="1"/>
</dbReference>
<dbReference type="FunFam" id="1.10.10.60:FF:000003">
    <property type="entry name" value="Iroquois-class homeobox protein IRX"/>
    <property type="match status" value="1"/>
</dbReference>
<dbReference type="Gene3D" id="1.10.10.60">
    <property type="entry name" value="Homeodomain-like"/>
    <property type="match status" value="1"/>
</dbReference>
<dbReference type="InterPro" id="IPR001356">
    <property type="entry name" value="HD"/>
</dbReference>
<dbReference type="InterPro" id="IPR017970">
    <property type="entry name" value="Homeobox_CS"/>
</dbReference>
<dbReference type="InterPro" id="IPR009057">
    <property type="entry name" value="Homeodomain-like_sf"/>
</dbReference>
<dbReference type="InterPro" id="IPR003893">
    <property type="entry name" value="Iroquois_homeo"/>
</dbReference>
<dbReference type="InterPro" id="IPR008422">
    <property type="entry name" value="KN_HD"/>
</dbReference>
<dbReference type="PANTHER" id="PTHR11211">
    <property type="entry name" value="IROQUOIS-CLASS HOMEODOMAIN PROTEIN IRX"/>
    <property type="match status" value="1"/>
</dbReference>
<dbReference type="PANTHER" id="PTHR11211:SF13">
    <property type="entry name" value="IROQUOIS-CLASS HOMEODOMAIN PROTEIN IRX-1"/>
    <property type="match status" value="1"/>
</dbReference>
<dbReference type="Pfam" id="PF05920">
    <property type="entry name" value="Homeobox_KN"/>
    <property type="match status" value="1"/>
</dbReference>
<dbReference type="SMART" id="SM00389">
    <property type="entry name" value="HOX"/>
    <property type="match status" value="1"/>
</dbReference>
<dbReference type="SMART" id="SM00548">
    <property type="entry name" value="IRO"/>
    <property type="match status" value="1"/>
</dbReference>
<dbReference type="SUPFAM" id="SSF46689">
    <property type="entry name" value="Homeodomain-like"/>
    <property type="match status" value="1"/>
</dbReference>
<dbReference type="PROSITE" id="PS00027">
    <property type="entry name" value="HOMEOBOX_1"/>
    <property type="match status" value="1"/>
</dbReference>
<dbReference type="PROSITE" id="PS50071">
    <property type="entry name" value="HOMEOBOX_2"/>
    <property type="match status" value="1"/>
</dbReference>
<protein>
    <recommendedName>
        <fullName>Iroquois-class homeodomain protein irx-1-B</fullName>
    </recommendedName>
    <alternativeName>
        <fullName>Iroquois homeobox protein 1-B</fullName>
    </alternativeName>
</protein>
<feature type="chain" id="PRO_0000388714" description="Iroquois-class homeodomain protein irx-1-B">
    <location>
        <begin position="1"/>
        <end position="462"/>
    </location>
</feature>
<feature type="DNA-binding region" description="Homeobox; TALE-type" evidence="3">
    <location>
        <begin position="121"/>
        <end position="183"/>
    </location>
</feature>
<feature type="region of interest" description="Disordered" evidence="4">
    <location>
        <begin position="191"/>
        <end position="302"/>
    </location>
</feature>
<feature type="region of interest" description="Disordered" evidence="4">
    <location>
        <begin position="314"/>
        <end position="339"/>
    </location>
</feature>
<feature type="region of interest" description="Disordered" evidence="4">
    <location>
        <begin position="405"/>
        <end position="462"/>
    </location>
</feature>
<feature type="compositionally biased region" description="Acidic residues" evidence="4">
    <location>
        <begin position="210"/>
        <end position="220"/>
    </location>
</feature>
<feature type="compositionally biased region" description="Acidic residues" evidence="4">
    <location>
        <begin position="228"/>
        <end position="239"/>
    </location>
</feature>
<feature type="compositionally biased region" description="Basic and acidic residues" evidence="4">
    <location>
        <begin position="240"/>
        <end position="257"/>
    </location>
</feature>
<feature type="compositionally biased region" description="Basic and acidic residues" evidence="4">
    <location>
        <begin position="410"/>
        <end position="426"/>
    </location>
</feature>
<feature type="compositionally biased region" description="Polar residues" evidence="4">
    <location>
        <begin position="446"/>
        <end position="455"/>
    </location>
</feature>
<organism>
    <name type="scientific">Xenopus laevis</name>
    <name type="common">African clawed frog</name>
    <dbReference type="NCBI Taxonomy" id="8355"/>
    <lineage>
        <taxon>Eukaryota</taxon>
        <taxon>Metazoa</taxon>
        <taxon>Chordata</taxon>
        <taxon>Craniata</taxon>
        <taxon>Vertebrata</taxon>
        <taxon>Euteleostomi</taxon>
        <taxon>Amphibia</taxon>
        <taxon>Batrachia</taxon>
        <taxon>Anura</taxon>
        <taxon>Pipoidea</taxon>
        <taxon>Pipidae</taxon>
        <taxon>Xenopodinae</taxon>
        <taxon>Xenopus</taxon>
        <taxon>Xenopus</taxon>
    </lineage>
</organism>
<evidence type="ECO:0000250" key="1"/>
<evidence type="ECO:0000255" key="2"/>
<evidence type="ECO:0000255" key="3">
    <source>
        <dbReference type="PROSITE-ProRule" id="PRU00108"/>
    </source>
</evidence>
<evidence type="ECO:0000256" key="4">
    <source>
        <dbReference type="SAM" id="MobiDB-lite"/>
    </source>
</evidence>
<evidence type="ECO:0000305" key="5"/>
<evidence type="ECO:0000312" key="6">
    <source>
        <dbReference type="EMBL" id="AAI10768.1"/>
    </source>
</evidence>
<name>IRX1B_XENLA</name>
<reference evidence="6" key="1">
    <citation type="submission" date="2005-12" db="EMBL/GenBank/DDBJ databases">
        <authorList>
            <consortium name="NIH - Xenopus Gene Collection (XGC) project"/>
        </authorList>
    </citation>
    <scope>NUCLEOTIDE SEQUENCE [LARGE SCALE MRNA]</scope>
    <source>
        <tissue evidence="6">Neurula</tissue>
    </source>
</reference>
<sequence>MSFPQLGYPQYLTAGQGAVYGGERPGVLAAAAAAAAAAGRPTGAELGSCPTAAVTSVLGMYASPYSSPNYSAFLPYTTDLTLFSQMGSQYELKDNPGVHPATFAAHTTPGYYPYGQFQYGDPGRPKNATRESTSTLKAWLNEHRKNPYPTKGEKIMLAIITKMTLTQVSTWFANARRRLKKENKVTWGAMGKEDDNIFGSDNEGDHEKNEDDEEIDLESIDIDKIDDNDGEQSNEEEDEKLDHFRHGEKVSLKKESEVMIPSSDGLKPKDSLSLGKECSDTSNTRIVSPGGQGNIQAPPHSKPKIWSLAETATSPDGALKSSPPPSQANHTSPQMQHPAFLPSHGLYTCQIGKFHNWTNGAFLTQSSLINMRSLLGVNPHHAAHHNHHHLQAHQQSTLLATNLGSLSSDRTPERTSPKHSDRENLPRTESPPQLKPSFQAVREKTFSQQEGTSRILTALPSA</sequence>
<accession>Q2TAQ8</accession>